<gene>
    <name evidence="1" type="primary">groEL</name>
    <name evidence="1" type="synonym">groL</name>
    <name type="synonym">mopA</name>
    <name type="ordered locus">MG392</name>
</gene>
<name>CH60_MYCGE</name>
<reference key="1">
    <citation type="journal article" date="1995" name="Science">
        <title>The minimal gene complement of Mycoplasma genitalium.</title>
        <authorList>
            <person name="Fraser C.M."/>
            <person name="Gocayne J.D."/>
            <person name="White O."/>
            <person name="Adams M.D."/>
            <person name="Clayton R.A."/>
            <person name="Fleischmann R.D."/>
            <person name="Bult C.J."/>
            <person name="Kerlavage A.R."/>
            <person name="Sutton G.G."/>
            <person name="Kelley J.M."/>
            <person name="Fritchman J.L."/>
            <person name="Weidman J.F."/>
            <person name="Small K.V."/>
            <person name="Sandusky M."/>
            <person name="Fuhrmann J.L."/>
            <person name="Nguyen D.T."/>
            <person name="Utterback T.R."/>
            <person name="Saudek D.M."/>
            <person name="Phillips C.A."/>
            <person name="Merrick J.M."/>
            <person name="Tomb J.-F."/>
            <person name="Dougherty B.A."/>
            <person name="Bott K.F."/>
            <person name="Hu P.-C."/>
            <person name="Lucier T.S."/>
            <person name="Peterson S.N."/>
            <person name="Smith H.O."/>
            <person name="Hutchison C.A. III"/>
            <person name="Venter J.C."/>
        </authorList>
    </citation>
    <scope>NUCLEOTIDE SEQUENCE [LARGE SCALE GENOMIC DNA]</scope>
    <source>
        <strain>ATCC 33530 / DSM 19775 / NCTC 10195 / G37</strain>
    </source>
</reference>
<reference key="2">
    <citation type="journal article" date="1993" name="J. Bacteriol.">
        <title>A survey of the Mycoplasma genitalium genome by using random sequencing.</title>
        <authorList>
            <person name="Peterson S.N."/>
            <person name="Hu P.-C."/>
            <person name="Bott K.F."/>
            <person name="Hutchison C.A. III"/>
        </authorList>
    </citation>
    <scope>NUCLEOTIDE SEQUENCE [GENOMIC DNA] OF 1-60 AND 466-543</scope>
    <source>
        <strain>ATCC 33530 / DSM 19775 / NCTC 10195 / G37</strain>
    </source>
</reference>
<reference key="3">
    <citation type="journal article" date="2006" name="Proc. Natl. Acad. Sci. U.S.A.">
        <title>Essential genes of a minimal bacterium.</title>
        <authorList>
            <person name="Glass J.I."/>
            <person name="Assad-Garcia N."/>
            <person name="Alperovich N."/>
            <person name="Yooseph S."/>
            <person name="Lewis M.R."/>
            <person name="Maruf M."/>
            <person name="Hutchison C.A. III"/>
            <person name="Smith H.O."/>
            <person name="Venter J.C."/>
        </authorList>
    </citation>
    <scope>SEQUENCE REVISION TO 301 AND 326</scope>
    <scope>DISRUPTION PHENOTYPE</scope>
    <source>
        <strain>ATCC 33530 / DSM 19775 / NCTC 10195 / G37</strain>
    </source>
</reference>
<evidence type="ECO:0000255" key="1">
    <source>
        <dbReference type="HAMAP-Rule" id="MF_00600"/>
    </source>
</evidence>
<evidence type="ECO:0000269" key="2">
    <source>
    </source>
</evidence>
<evidence type="ECO:0000305" key="3"/>
<organism>
    <name type="scientific">Mycoplasma genitalium (strain ATCC 33530 / DSM 19775 / NCTC 10195 / G37)</name>
    <name type="common">Mycoplasmoides genitalium</name>
    <dbReference type="NCBI Taxonomy" id="243273"/>
    <lineage>
        <taxon>Bacteria</taxon>
        <taxon>Bacillati</taxon>
        <taxon>Mycoplasmatota</taxon>
        <taxon>Mycoplasmoidales</taxon>
        <taxon>Mycoplasmoidaceae</taxon>
        <taxon>Mycoplasmoides</taxon>
    </lineage>
</organism>
<dbReference type="EC" id="5.6.1.7" evidence="1"/>
<dbReference type="EMBL" id="L43967">
    <property type="protein sequence ID" value="AAC71620.2"/>
    <property type="molecule type" value="Genomic_DNA"/>
</dbReference>
<dbReference type="EMBL" id="U02252">
    <property type="protein sequence ID" value="AAD12515.1"/>
    <property type="status" value="ALT_INIT"/>
    <property type="molecule type" value="Genomic_DNA"/>
</dbReference>
<dbReference type="EMBL" id="U02268">
    <property type="protein sequence ID" value="AAD12534.1"/>
    <property type="molecule type" value="Genomic_DNA"/>
</dbReference>
<dbReference type="PIR" id="D64243">
    <property type="entry name" value="D64243"/>
</dbReference>
<dbReference type="RefSeq" id="WP_009885631.1">
    <property type="nucleotide sequence ID" value="NC_000908.2"/>
</dbReference>
<dbReference type="SMR" id="P47632"/>
<dbReference type="FunCoup" id="P47632">
    <property type="interactions" value="202"/>
</dbReference>
<dbReference type="STRING" id="243273.MG_392"/>
<dbReference type="GeneID" id="88282577"/>
<dbReference type="KEGG" id="mge:MG_392"/>
<dbReference type="eggNOG" id="COG0459">
    <property type="taxonomic scope" value="Bacteria"/>
</dbReference>
<dbReference type="HOGENOM" id="CLU_016503_3_0_14"/>
<dbReference type="InParanoid" id="P47632"/>
<dbReference type="OrthoDB" id="9766614at2"/>
<dbReference type="Proteomes" id="UP000000807">
    <property type="component" value="Chromosome"/>
</dbReference>
<dbReference type="GO" id="GO:1990220">
    <property type="term" value="C:GroEL-GroES complex"/>
    <property type="evidence" value="ECO:0000318"/>
    <property type="project" value="GO_Central"/>
</dbReference>
<dbReference type="GO" id="GO:0005524">
    <property type="term" value="F:ATP binding"/>
    <property type="evidence" value="ECO:0000318"/>
    <property type="project" value="GO_Central"/>
</dbReference>
<dbReference type="GO" id="GO:0140662">
    <property type="term" value="F:ATP-dependent protein folding chaperone"/>
    <property type="evidence" value="ECO:0007669"/>
    <property type="project" value="InterPro"/>
</dbReference>
<dbReference type="GO" id="GO:0016853">
    <property type="term" value="F:isomerase activity"/>
    <property type="evidence" value="ECO:0007669"/>
    <property type="project" value="UniProtKB-KW"/>
</dbReference>
<dbReference type="GO" id="GO:0051082">
    <property type="term" value="F:unfolded protein binding"/>
    <property type="evidence" value="ECO:0000318"/>
    <property type="project" value="GO_Central"/>
</dbReference>
<dbReference type="GO" id="GO:0051085">
    <property type="term" value="P:chaperone cofactor-dependent protein refolding"/>
    <property type="evidence" value="ECO:0000318"/>
    <property type="project" value="GO_Central"/>
</dbReference>
<dbReference type="GO" id="GO:0042026">
    <property type="term" value="P:protein refolding"/>
    <property type="evidence" value="ECO:0007669"/>
    <property type="project" value="UniProtKB-UniRule"/>
</dbReference>
<dbReference type="GO" id="GO:0009408">
    <property type="term" value="P:response to heat"/>
    <property type="evidence" value="ECO:0000318"/>
    <property type="project" value="GO_Central"/>
</dbReference>
<dbReference type="CDD" id="cd03344">
    <property type="entry name" value="GroEL"/>
    <property type="match status" value="1"/>
</dbReference>
<dbReference type="FunFam" id="3.50.7.10:FF:000001">
    <property type="entry name" value="60 kDa chaperonin"/>
    <property type="match status" value="1"/>
</dbReference>
<dbReference type="Gene3D" id="3.50.7.10">
    <property type="entry name" value="GroEL"/>
    <property type="match status" value="1"/>
</dbReference>
<dbReference type="Gene3D" id="1.10.560.10">
    <property type="entry name" value="GroEL-like equatorial domain"/>
    <property type="match status" value="1"/>
</dbReference>
<dbReference type="Gene3D" id="3.30.260.10">
    <property type="entry name" value="TCP-1-like chaperonin intermediate domain"/>
    <property type="match status" value="1"/>
</dbReference>
<dbReference type="HAMAP" id="MF_00600">
    <property type="entry name" value="CH60"/>
    <property type="match status" value="1"/>
</dbReference>
<dbReference type="InterPro" id="IPR018370">
    <property type="entry name" value="Chaperonin_Cpn60_CS"/>
</dbReference>
<dbReference type="InterPro" id="IPR001844">
    <property type="entry name" value="Cpn60/GroEL"/>
</dbReference>
<dbReference type="InterPro" id="IPR002423">
    <property type="entry name" value="Cpn60/GroEL/TCP-1"/>
</dbReference>
<dbReference type="InterPro" id="IPR027409">
    <property type="entry name" value="GroEL-like_apical_dom_sf"/>
</dbReference>
<dbReference type="InterPro" id="IPR027413">
    <property type="entry name" value="GROEL-like_equatorial_sf"/>
</dbReference>
<dbReference type="InterPro" id="IPR027410">
    <property type="entry name" value="TCP-1-like_intermed_sf"/>
</dbReference>
<dbReference type="NCBIfam" id="TIGR02348">
    <property type="entry name" value="GroEL"/>
    <property type="match status" value="1"/>
</dbReference>
<dbReference type="NCBIfam" id="NF000592">
    <property type="entry name" value="PRK00013.1"/>
    <property type="match status" value="1"/>
</dbReference>
<dbReference type="NCBIfam" id="NF009487">
    <property type="entry name" value="PRK12849.1"/>
    <property type="match status" value="1"/>
</dbReference>
<dbReference type="NCBIfam" id="NF009488">
    <property type="entry name" value="PRK12850.1"/>
    <property type="match status" value="1"/>
</dbReference>
<dbReference type="NCBIfam" id="NF009489">
    <property type="entry name" value="PRK12851.1"/>
    <property type="match status" value="1"/>
</dbReference>
<dbReference type="PANTHER" id="PTHR45633">
    <property type="entry name" value="60 KDA HEAT SHOCK PROTEIN, MITOCHONDRIAL"/>
    <property type="match status" value="1"/>
</dbReference>
<dbReference type="Pfam" id="PF00118">
    <property type="entry name" value="Cpn60_TCP1"/>
    <property type="match status" value="1"/>
</dbReference>
<dbReference type="PRINTS" id="PR00298">
    <property type="entry name" value="CHAPERONIN60"/>
</dbReference>
<dbReference type="SUPFAM" id="SSF52029">
    <property type="entry name" value="GroEL apical domain-like"/>
    <property type="match status" value="1"/>
</dbReference>
<dbReference type="SUPFAM" id="SSF48592">
    <property type="entry name" value="GroEL equatorial domain-like"/>
    <property type="match status" value="1"/>
</dbReference>
<dbReference type="SUPFAM" id="SSF54849">
    <property type="entry name" value="GroEL-intermediate domain like"/>
    <property type="match status" value="1"/>
</dbReference>
<dbReference type="PROSITE" id="PS00296">
    <property type="entry name" value="CHAPERONINS_CPN60"/>
    <property type="match status" value="1"/>
</dbReference>
<keyword id="KW-0067">ATP-binding</keyword>
<keyword id="KW-0143">Chaperone</keyword>
<keyword id="KW-0963">Cytoplasm</keyword>
<keyword id="KW-0413">Isomerase</keyword>
<keyword id="KW-0547">Nucleotide-binding</keyword>
<keyword id="KW-1185">Reference proteome</keyword>
<accession>P47632</accession>
<accession>Q49358</accession>
<feature type="chain" id="PRO_0000063430" description="Chaperonin GroEL">
    <location>
        <begin position="1"/>
        <end position="543"/>
    </location>
</feature>
<feature type="binding site" evidence="1">
    <location>
        <begin position="29"/>
        <end position="32"/>
    </location>
    <ligand>
        <name>ATP</name>
        <dbReference type="ChEBI" id="CHEBI:30616"/>
    </ligand>
</feature>
<feature type="binding site" evidence="1">
    <location>
        <begin position="86"/>
        <end position="90"/>
    </location>
    <ligand>
        <name>ATP</name>
        <dbReference type="ChEBI" id="CHEBI:30616"/>
    </ligand>
</feature>
<feature type="binding site" evidence="1">
    <location>
        <position position="413"/>
    </location>
    <ligand>
        <name>ATP</name>
        <dbReference type="ChEBI" id="CHEBI:30616"/>
    </ligand>
</feature>
<feature type="binding site" evidence="1">
    <location>
        <position position="504"/>
    </location>
    <ligand>
        <name>ATP</name>
        <dbReference type="ChEBI" id="CHEBI:30616"/>
    </ligand>
</feature>
<proteinExistence type="inferred from homology"/>
<sequence length="543" mass="58439">MAKELIFGKDARTRLLQGINKIANAVKVTVGPKGQNVILERKFANPLITNDGVTIAKEIELSDPVENIGAKVISVAAVSTNDIAGDGTTTATILAQEMTNRGIEIINKGANPVNIRRGIEDASLLIIKELEKYSKKINTNEEIEQVAAISSGSKEIGKLIAQAMALVGKNGVITTDDAKTINTTLETTEGIEFKGTYASPYMVSDQEKMEVVLEQPKILVSSLKINTIKEILPLLEGSVENGNPLLIVAPDFAEEVVTTLAVNKLRGTINVVAVKCNEYGERQKAALEDLAISSGTLAYNNEINSGFKDVTVDNLGDARKVQIAKEKTTVIGGKGNKDKIKKHVELLNGRLKQTTDKYDSDLIKERIAYLSQGVAVIRVGGATELAQKELKLRIEDALNSTKAAVEEGIIAGGGVGLLNASCVLTNSKLKERYENETSVENIKEILLGFEIVQKSLEAPARQIIQNSGVDPVKILSELKNEKTGVGFDAETKKKVDMIANGIIDPTKVTKTALEKAASVASSLITTNVAVYDVKERKDNSFSE</sequence>
<comment type="function">
    <text evidence="1">Together with its co-chaperonin GroES, plays an essential role in assisting protein folding. The GroEL-GroES system forms a nano-cage that allows encapsulation of the non-native substrate proteins and provides a physical environment optimized to promote and accelerate protein folding.</text>
</comment>
<comment type="catalytic activity">
    <reaction evidence="1">
        <text>ATP + H2O + a folded polypeptide = ADP + phosphate + an unfolded polypeptide.</text>
        <dbReference type="EC" id="5.6.1.7"/>
    </reaction>
</comment>
<comment type="subunit">
    <text evidence="1">Forms a cylinder of 14 subunits composed of two heptameric rings stacked back-to-back. Interacts with the co-chaperonin GroES.</text>
</comment>
<comment type="subcellular location">
    <subcellularLocation>
        <location evidence="1">Cytoplasm</location>
    </subcellularLocation>
</comment>
<comment type="disruption phenotype">
    <text evidence="2">Probably essential, it was not disrupted in a global transposon mutagenesis study.</text>
</comment>
<comment type="similarity">
    <text evidence="1">Belongs to the chaperonin (HSP60) family.</text>
</comment>
<comment type="sequence caution" evidence="3">
    <conflict type="erroneous initiation">
        <sequence resource="EMBL-CDS" id="AAD12515"/>
    </conflict>
    <text>Extended N-terminus.</text>
</comment>
<protein>
    <recommendedName>
        <fullName evidence="1">Chaperonin GroEL</fullName>
        <ecNumber evidence="1">5.6.1.7</ecNumber>
    </recommendedName>
    <alternativeName>
        <fullName evidence="1">60 kDa chaperonin</fullName>
    </alternativeName>
    <alternativeName>
        <fullName evidence="1">Chaperonin-60</fullName>
        <shortName evidence="1">Cpn60</shortName>
    </alternativeName>
</protein>